<keyword id="KW-0223">Dioxygenase</keyword>
<keyword id="KW-0408">Iron</keyword>
<keyword id="KW-0479">Metal-binding</keyword>
<keyword id="KW-0560">Oxidoreductase</keyword>
<keyword id="KW-1185">Reference proteome</keyword>
<keyword id="KW-0847">Vitamin C</keyword>
<protein>
    <recommendedName>
        <fullName evidence="1">PKHD-type hydroxylase CC_0027</fullName>
        <ecNumber evidence="1">1.14.11.-</ecNumber>
    </recommendedName>
</protein>
<feature type="chain" id="PRO_0000206675" description="PKHD-type hydroxylase CC_0027">
    <location>
        <begin position="1"/>
        <end position="227"/>
    </location>
</feature>
<feature type="domain" description="Fe2OG dioxygenase" evidence="1">
    <location>
        <begin position="78"/>
        <end position="178"/>
    </location>
</feature>
<feature type="binding site" evidence="1">
    <location>
        <position position="96"/>
    </location>
    <ligand>
        <name>Fe cation</name>
        <dbReference type="ChEBI" id="CHEBI:24875"/>
    </ligand>
</feature>
<feature type="binding site" evidence="1">
    <location>
        <position position="98"/>
    </location>
    <ligand>
        <name>Fe cation</name>
        <dbReference type="ChEBI" id="CHEBI:24875"/>
    </ligand>
</feature>
<feature type="binding site" evidence="1">
    <location>
        <position position="159"/>
    </location>
    <ligand>
        <name>Fe cation</name>
        <dbReference type="ChEBI" id="CHEBI:24875"/>
    </ligand>
</feature>
<feature type="binding site" evidence="1">
    <location>
        <position position="169"/>
    </location>
    <ligand>
        <name>2-oxoglutarate</name>
        <dbReference type="ChEBI" id="CHEBI:16810"/>
    </ligand>
</feature>
<name>Y027_CAUVC</name>
<dbReference type="EC" id="1.14.11.-" evidence="1"/>
<dbReference type="EMBL" id="AE005673">
    <property type="protein sequence ID" value="AAK22015.1"/>
    <property type="status" value="ALT_INIT"/>
    <property type="molecule type" value="Genomic_DNA"/>
</dbReference>
<dbReference type="PIR" id="C87252">
    <property type="entry name" value="C87252"/>
</dbReference>
<dbReference type="RefSeq" id="NP_418847.2">
    <property type="nucleotide sequence ID" value="NC_002696.2"/>
</dbReference>
<dbReference type="RefSeq" id="WP_010917917.1">
    <property type="nucleotide sequence ID" value="NC_002696.2"/>
</dbReference>
<dbReference type="SMR" id="Q9AC39"/>
<dbReference type="STRING" id="190650.CC_0027"/>
<dbReference type="EnsemblBacteria" id="AAK22015">
    <property type="protein sequence ID" value="AAK22015"/>
    <property type="gene ID" value="CC_0027"/>
</dbReference>
<dbReference type="KEGG" id="ccr:CC_0027"/>
<dbReference type="PATRIC" id="fig|190650.5.peg.28"/>
<dbReference type="eggNOG" id="COG3128">
    <property type="taxonomic scope" value="Bacteria"/>
</dbReference>
<dbReference type="HOGENOM" id="CLU_106663_0_0_5"/>
<dbReference type="Proteomes" id="UP000001816">
    <property type="component" value="Chromosome"/>
</dbReference>
<dbReference type="GO" id="GO:0016706">
    <property type="term" value="F:2-oxoglutarate-dependent dioxygenase activity"/>
    <property type="evidence" value="ECO:0007669"/>
    <property type="project" value="UniProtKB-UniRule"/>
</dbReference>
<dbReference type="GO" id="GO:0005506">
    <property type="term" value="F:iron ion binding"/>
    <property type="evidence" value="ECO:0007669"/>
    <property type="project" value="UniProtKB-UniRule"/>
</dbReference>
<dbReference type="GO" id="GO:0031418">
    <property type="term" value="F:L-ascorbic acid binding"/>
    <property type="evidence" value="ECO:0007669"/>
    <property type="project" value="UniProtKB-KW"/>
</dbReference>
<dbReference type="GO" id="GO:0006974">
    <property type="term" value="P:DNA damage response"/>
    <property type="evidence" value="ECO:0007669"/>
    <property type="project" value="TreeGrafter"/>
</dbReference>
<dbReference type="GO" id="GO:0006879">
    <property type="term" value="P:intracellular iron ion homeostasis"/>
    <property type="evidence" value="ECO:0007669"/>
    <property type="project" value="TreeGrafter"/>
</dbReference>
<dbReference type="Gene3D" id="2.60.120.620">
    <property type="entry name" value="q2cbj1_9rhob like domain"/>
    <property type="match status" value="1"/>
</dbReference>
<dbReference type="Gene3D" id="4.10.860.20">
    <property type="entry name" value="Rabenosyn, Rab binding domain"/>
    <property type="match status" value="1"/>
</dbReference>
<dbReference type="HAMAP" id="MF_00657">
    <property type="entry name" value="Hydroxyl_YbiX"/>
    <property type="match status" value="1"/>
</dbReference>
<dbReference type="InterPro" id="IPR005123">
    <property type="entry name" value="Oxoglu/Fe-dep_dioxygenase_dom"/>
</dbReference>
<dbReference type="InterPro" id="IPR041097">
    <property type="entry name" value="PKHD_C"/>
</dbReference>
<dbReference type="InterPro" id="IPR023550">
    <property type="entry name" value="PKHD_hydroxylase"/>
</dbReference>
<dbReference type="InterPro" id="IPR006620">
    <property type="entry name" value="Pro_4_hyd_alph"/>
</dbReference>
<dbReference type="InterPro" id="IPR044862">
    <property type="entry name" value="Pro_4_hyd_alph_FE2OG_OXY"/>
</dbReference>
<dbReference type="NCBIfam" id="NF003973">
    <property type="entry name" value="PRK05467.1-2"/>
    <property type="match status" value="1"/>
</dbReference>
<dbReference type="NCBIfam" id="NF003974">
    <property type="entry name" value="PRK05467.1-3"/>
    <property type="match status" value="1"/>
</dbReference>
<dbReference type="NCBIfam" id="NF003975">
    <property type="entry name" value="PRK05467.1-4"/>
    <property type="match status" value="1"/>
</dbReference>
<dbReference type="PANTHER" id="PTHR41536">
    <property type="entry name" value="PKHD-TYPE HYDROXYLASE YBIX"/>
    <property type="match status" value="1"/>
</dbReference>
<dbReference type="PANTHER" id="PTHR41536:SF1">
    <property type="entry name" value="PKHD-TYPE HYDROXYLASE YBIX"/>
    <property type="match status" value="1"/>
</dbReference>
<dbReference type="Pfam" id="PF13640">
    <property type="entry name" value="2OG-FeII_Oxy_3"/>
    <property type="match status" value="1"/>
</dbReference>
<dbReference type="Pfam" id="PF18331">
    <property type="entry name" value="PKHD_C"/>
    <property type="match status" value="1"/>
</dbReference>
<dbReference type="SMART" id="SM00702">
    <property type="entry name" value="P4Hc"/>
    <property type="match status" value="1"/>
</dbReference>
<dbReference type="PROSITE" id="PS51471">
    <property type="entry name" value="FE2OG_OXY"/>
    <property type="match status" value="1"/>
</dbReference>
<proteinExistence type="inferred from homology"/>
<evidence type="ECO:0000255" key="1">
    <source>
        <dbReference type="HAMAP-Rule" id="MF_00657"/>
    </source>
</evidence>
<evidence type="ECO:0000305" key="2"/>
<gene>
    <name type="ordered locus">CC_0027</name>
</gene>
<sequence length="227" mass="25214">MMLQIPEVLTKAQVAECRAILDAGPWVDGNVTSGFQAAMAKNNEQLPQDSAEARHVGAIIVQALEANPLFVSAALPRTILSPMFNRYGEGMGFRDHVDNAIRRDPVTGQRLRTDLSCTLFLAEPEDYDGGELVVNDLYGDHVVKLAAGDAILYPSTSLHHVTTVTRGRRTASFFWIQSLIRDDARRSLLLDMDVAIQQLSRKVERDDEAILSLTGVYHNLLRQWAEV</sequence>
<organism>
    <name type="scientific">Caulobacter vibrioides (strain ATCC 19089 / CIP 103742 / CB 15)</name>
    <name type="common">Caulobacter crescentus</name>
    <dbReference type="NCBI Taxonomy" id="190650"/>
    <lineage>
        <taxon>Bacteria</taxon>
        <taxon>Pseudomonadati</taxon>
        <taxon>Pseudomonadota</taxon>
        <taxon>Alphaproteobacteria</taxon>
        <taxon>Caulobacterales</taxon>
        <taxon>Caulobacteraceae</taxon>
        <taxon>Caulobacter</taxon>
    </lineage>
</organism>
<comment type="cofactor">
    <cofactor evidence="1">
        <name>Fe(2+)</name>
        <dbReference type="ChEBI" id="CHEBI:29033"/>
    </cofactor>
    <text evidence="1">Binds 1 Fe(2+) ion per subunit.</text>
</comment>
<comment type="cofactor">
    <cofactor evidence="1">
        <name>L-ascorbate</name>
        <dbReference type="ChEBI" id="CHEBI:38290"/>
    </cofactor>
</comment>
<comment type="sequence caution" evidence="2">
    <conflict type="erroneous initiation">
        <sequence resource="EMBL-CDS" id="AAK22015"/>
    </conflict>
</comment>
<reference key="1">
    <citation type="journal article" date="2001" name="Proc. Natl. Acad. Sci. U.S.A.">
        <title>Complete genome sequence of Caulobacter crescentus.</title>
        <authorList>
            <person name="Nierman W.C."/>
            <person name="Feldblyum T.V."/>
            <person name="Laub M.T."/>
            <person name="Paulsen I.T."/>
            <person name="Nelson K.E."/>
            <person name="Eisen J.A."/>
            <person name="Heidelberg J.F."/>
            <person name="Alley M.R.K."/>
            <person name="Ohta N."/>
            <person name="Maddock J.R."/>
            <person name="Potocka I."/>
            <person name="Nelson W.C."/>
            <person name="Newton A."/>
            <person name="Stephens C."/>
            <person name="Phadke N.D."/>
            <person name="Ely B."/>
            <person name="DeBoy R.T."/>
            <person name="Dodson R.J."/>
            <person name="Durkin A.S."/>
            <person name="Gwinn M.L."/>
            <person name="Haft D.H."/>
            <person name="Kolonay J.F."/>
            <person name="Smit J."/>
            <person name="Craven M.B."/>
            <person name="Khouri H.M."/>
            <person name="Shetty J."/>
            <person name="Berry K.J."/>
            <person name="Utterback T.R."/>
            <person name="Tran K."/>
            <person name="Wolf A.M."/>
            <person name="Vamathevan J.J."/>
            <person name="Ermolaeva M.D."/>
            <person name="White O."/>
            <person name="Salzberg S.L."/>
            <person name="Venter J.C."/>
            <person name="Shapiro L."/>
            <person name="Fraser C.M."/>
        </authorList>
    </citation>
    <scope>NUCLEOTIDE SEQUENCE [LARGE SCALE GENOMIC DNA]</scope>
    <source>
        <strain>ATCC 19089 / CIP 103742 / CB 15</strain>
    </source>
</reference>
<accession>Q9AC39</accession>